<sequence>MLGRKLGKKTAQAKGRGAAAAKELGLFVDFSPEDMMLGIPDDPDDGDLEAELAALTGVKAVSKPKPKGKAPLPMEEIEKMAQDCMTDMTGEDDDDDLEEDEELLAELQDVVGEEEEVEQSQPSDTEESEPSASETQEHTEPEQQVNSSVAEIQHNLQVPAGGMLQVLEERIGNYKEAISNAKLSNESAKARRYERGLKTLESMLSAARQGRTVIEADIPPPVACGKPAVSPTTDVPTTDTSKQGLGDLNDVPMETTEAVTNLEKPEDPVSKATTNDGGAVEKTHVASENDTDSKTVLLLRQRDYKLAALKAKQTGDIEKAKEYMKISKKFSVVLEALESGQPVDLSNMPAAPEDHEAMVTESKIIAHPTPAPPVSNILNTQGSSVGSLLQALQQRMEKYKSAAQQAKSSGDDRKARMHERIAKQYQDTIRAQKAGRQVNLAELPVPPGFPPLPGMEQTEEEGSVEKALEAAQKLAKTAGEDVDDDEDECQAKPPGHPKPTQLVKPLVMPAISDNEERLLPIKAPVKVASEETFPPAVQEQLEFLEHRKKQYRKAALQAKQKNDLEQAKQHMRVAHTLQVSIDQVKSGKLVDISKVPSLPDDEESDFVVVEHEDIKSPQNSEDVYNMLMKLLHEQHEKCIRYSKQFTQMGNVAETTRFENMAEDCKKNCEILQLSQAQGLDPPPYHFEDKTLKIVRVFSELSSTEMLLIIVRGINLPAPSGVAPNDLDAYVKFEFPYPSSEQPQKNKTLVIKNTNSPEYEQSFKLNINRNHRGFKRVIQTKGIKFEIFHKGFFLVRSDKQVGSASVKLDKLETQCEIREIVEVFDGRKPTGGKLEIKVRLRDPLNGQDLQVVTEKWLVMGHVPRK</sequence>
<name>C2D1B_XENLA</name>
<gene>
    <name type="primary">cc2d1b</name>
</gene>
<evidence type="ECO:0000255" key="1"/>
<evidence type="ECO:0000255" key="2">
    <source>
        <dbReference type="PROSITE-ProRule" id="PRU00041"/>
    </source>
</evidence>
<evidence type="ECO:0000256" key="3">
    <source>
        <dbReference type="SAM" id="MobiDB-lite"/>
    </source>
</evidence>
<evidence type="ECO:0000305" key="4"/>
<protein>
    <recommendedName>
        <fullName>Coiled-coil and C2 domain-containing protein 1B</fullName>
    </recommendedName>
</protein>
<organism>
    <name type="scientific">Xenopus laevis</name>
    <name type="common">African clawed frog</name>
    <dbReference type="NCBI Taxonomy" id="8355"/>
    <lineage>
        <taxon>Eukaryota</taxon>
        <taxon>Metazoa</taxon>
        <taxon>Chordata</taxon>
        <taxon>Craniata</taxon>
        <taxon>Vertebrata</taxon>
        <taxon>Euteleostomi</taxon>
        <taxon>Amphibia</taxon>
        <taxon>Batrachia</taxon>
        <taxon>Anura</taxon>
        <taxon>Pipoidea</taxon>
        <taxon>Pipidae</taxon>
        <taxon>Xenopodinae</taxon>
        <taxon>Xenopus</taxon>
        <taxon>Xenopus</taxon>
    </lineage>
</organism>
<accession>Q6PF54</accession>
<feature type="chain" id="PRO_0000288429" description="Coiled-coil and C2 domain-containing protein 1B">
    <location>
        <begin position="1"/>
        <end position="864"/>
    </location>
</feature>
<feature type="domain" description="C2" evidence="2">
    <location>
        <begin position="685"/>
        <end position="820"/>
    </location>
</feature>
<feature type="region of interest" description="Disordered" evidence="3">
    <location>
        <begin position="82"/>
        <end position="154"/>
    </location>
</feature>
<feature type="region of interest" description="Disordered" evidence="3">
    <location>
        <begin position="218"/>
        <end position="249"/>
    </location>
</feature>
<feature type="region of interest" description="Disordered" evidence="3">
    <location>
        <begin position="441"/>
        <end position="463"/>
    </location>
</feature>
<feature type="region of interest" description="Disordered" evidence="3">
    <location>
        <begin position="478"/>
        <end position="502"/>
    </location>
</feature>
<feature type="coiled-coil region" evidence="1">
    <location>
        <begin position="91"/>
        <end position="118"/>
    </location>
</feature>
<feature type="coiled-coil region" evidence="1">
    <location>
        <begin position="162"/>
        <end position="209"/>
    </location>
</feature>
<feature type="coiled-coil region" evidence="1">
    <location>
        <begin position="385"/>
        <end position="412"/>
    </location>
</feature>
<feature type="coiled-coil region" evidence="1">
    <location>
        <begin position="464"/>
        <end position="488"/>
    </location>
</feature>
<feature type="coiled-coil region" evidence="1">
    <location>
        <begin position="535"/>
        <end position="564"/>
    </location>
</feature>
<feature type="compositionally biased region" description="Acidic residues" evidence="3">
    <location>
        <begin position="89"/>
        <end position="104"/>
    </location>
</feature>
<feature type="compositionally biased region" description="Acidic residues" evidence="3">
    <location>
        <begin position="111"/>
        <end position="129"/>
    </location>
</feature>
<feature type="compositionally biased region" description="Polar residues" evidence="3">
    <location>
        <begin position="142"/>
        <end position="154"/>
    </location>
</feature>
<feature type="compositionally biased region" description="Low complexity" evidence="3">
    <location>
        <begin position="229"/>
        <end position="241"/>
    </location>
</feature>
<feature type="compositionally biased region" description="Pro residues" evidence="3">
    <location>
        <begin position="444"/>
        <end position="453"/>
    </location>
</feature>
<proteinExistence type="evidence at transcript level"/>
<comment type="similarity">
    <text evidence="4">Belongs to the CC2D1 family.</text>
</comment>
<reference key="1">
    <citation type="submission" date="2003-09" db="EMBL/GenBank/DDBJ databases">
        <authorList>
            <consortium name="NIH - Xenopus Gene Collection (XGC) project"/>
        </authorList>
    </citation>
    <scope>NUCLEOTIDE SEQUENCE [LARGE SCALE MRNA]</scope>
    <source>
        <tissue>Embryo</tissue>
    </source>
</reference>
<dbReference type="EMBL" id="BC057723">
    <property type="protein sequence ID" value="AAH57723.1"/>
    <property type="molecule type" value="mRNA"/>
</dbReference>
<dbReference type="RefSeq" id="NP_001079953.1">
    <property type="nucleotide sequence ID" value="NM_001086484.1"/>
</dbReference>
<dbReference type="RefSeq" id="XP_018111952.1">
    <property type="nucleotide sequence ID" value="XM_018256463.1"/>
</dbReference>
<dbReference type="SMR" id="Q6PF54"/>
<dbReference type="DNASU" id="379644"/>
<dbReference type="GeneID" id="379644"/>
<dbReference type="KEGG" id="xla:379644"/>
<dbReference type="AGR" id="Xenbase:XB-GENE-997991"/>
<dbReference type="CTD" id="379644"/>
<dbReference type="Xenbase" id="XB-GENE-997991">
    <property type="gene designation" value="cc2d1b.L"/>
</dbReference>
<dbReference type="OMA" id="NNNCPEY"/>
<dbReference type="OrthoDB" id="19996at2759"/>
<dbReference type="Proteomes" id="UP000186698">
    <property type="component" value="Chromosome 4L"/>
</dbReference>
<dbReference type="Bgee" id="379644">
    <property type="expression patterns" value="Expressed in zone of skin and 19 other cell types or tissues"/>
</dbReference>
<dbReference type="GO" id="GO:0005634">
    <property type="term" value="C:nucleus"/>
    <property type="evidence" value="ECO:0000318"/>
    <property type="project" value="GO_Central"/>
</dbReference>
<dbReference type="GO" id="GO:0000981">
    <property type="term" value="F:DNA-binding transcription factor activity, RNA polymerase II-specific"/>
    <property type="evidence" value="ECO:0000318"/>
    <property type="project" value="GO_Central"/>
</dbReference>
<dbReference type="GO" id="GO:0001227">
    <property type="term" value="F:DNA-binding transcription repressor activity, RNA polymerase II-specific"/>
    <property type="evidence" value="ECO:0007669"/>
    <property type="project" value="InterPro"/>
</dbReference>
<dbReference type="GO" id="GO:0000978">
    <property type="term" value="F:RNA polymerase II cis-regulatory region sequence-specific DNA binding"/>
    <property type="evidence" value="ECO:0000318"/>
    <property type="project" value="GO_Central"/>
</dbReference>
<dbReference type="GO" id="GO:0006357">
    <property type="term" value="P:regulation of transcription by RNA polymerase II"/>
    <property type="evidence" value="ECO:0000318"/>
    <property type="project" value="GO_Central"/>
</dbReference>
<dbReference type="CDD" id="cd08690">
    <property type="entry name" value="C2_Freud-1"/>
    <property type="match status" value="1"/>
</dbReference>
<dbReference type="FunFam" id="2.60.40.150:FF:000104">
    <property type="entry name" value="coiled-coil and C2 domain-containing protein 1B"/>
    <property type="match status" value="1"/>
</dbReference>
<dbReference type="Gene3D" id="2.60.40.150">
    <property type="entry name" value="C2 domain"/>
    <property type="match status" value="1"/>
</dbReference>
<dbReference type="InterPro" id="IPR000008">
    <property type="entry name" value="C2_dom"/>
</dbReference>
<dbReference type="InterPro" id="IPR035892">
    <property type="entry name" value="C2_domain_sf"/>
</dbReference>
<dbReference type="InterPro" id="IPR037772">
    <property type="entry name" value="C2_Freud"/>
</dbReference>
<dbReference type="InterPro" id="IPR039725">
    <property type="entry name" value="CC2D1A/B"/>
</dbReference>
<dbReference type="InterPro" id="IPR006608">
    <property type="entry name" value="CC2D1A/B_DM14"/>
</dbReference>
<dbReference type="PANTHER" id="PTHR13076">
    <property type="entry name" value="COILED-COIL AND C2 DOMAIN-CONTAINING PROTEIN 1-LIKE"/>
    <property type="match status" value="1"/>
</dbReference>
<dbReference type="PANTHER" id="PTHR13076:SF5">
    <property type="entry name" value="COILED-COIL AND C2 DOMAIN-CONTAINING PROTEIN 1B"/>
    <property type="match status" value="1"/>
</dbReference>
<dbReference type="Pfam" id="PF00168">
    <property type="entry name" value="C2"/>
    <property type="match status" value="1"/>
</dbReference>
<dbReference type="Pfam" id="PF21528">
    <property type="entry name" value="CC2D1A-B_DM14"/>
    <property type="match status" value="4"/>
</dbReference>
<dbReference type="SMART" id="SM00239">
    <property type="entry name" value="C2"/>
    <property type="match status" value="1"/>
</dbReference>
<dbReference type="SMART" id="SM00685">
    <property type="entry name" value="DM14"/>
    <property type="match status" value="4"/>
</dbReference>
<dbReference type="SUPFAM" id="SSF49562">
    <property type="entry name" value="C2 domain (Calcium/lipid-binding domain, CaLB)"/>
    <property type="match status" value="1"/>
</dbReference>
<dbReference type="PROSITE" id="PS50004">
    <property type="entry name" value="C2"/>
    <property type="match status" value="1"/>
</dbReference>
<keyword id="KW-0175">Coiled coil</keyword>
<keyword id="KW-1185">Reference proteome</keyword>